<reference evidence="5" key="1">
    <citation type="journal article" date="2019" name="Mol. Cell. Proteomics">
        <title>Conodipine-P1-3, the First Phospholipases A2 Characterized from Injected Cone Snail Venom.</title>
        <authorList>
            <person name="Moeller C."/>
            <person name="Davis W.C."/>
            <person name="Clark E."/>
            <person name="DeCaprio A."/>
            <person name="Mari F."/>
        </authorList>
    </citation>
    <scope>NUCLEOTIDE SEQUENCE [MRNA]</scope>
    <scope>MASS SPECTROMETRY</scope>
    <scope>SUBUNIT</scope>
    <scope>SUBCELLULAR LOCATION</scope>
    <scope>TISSUE SPECIFICITY</scope>
</reference>
<keyword id="KW-0106">Calcium</keyword>
<keyword id="KW-1015">Disulfide bond</keyword>
<keyword id="KW-0378">Hydrolase</keyword>
<keyword id="KW-0379">Hydroxylation</keyword>
<keyword id="KW-0873">Pyrrolidone carboxylic acid</keyword>
<keyword id="KW-0964">Secreted</keyword>
<keyword id="KW-0732">Signal</keyword>
<keyword id="KW-0800">Toxin</keyword>
<comment type="function">
    <text evidence="1">Catalyzes the calcium-dependent hydrolysis of the 2-acyl groups in 3-sn-phosphoglycerides.</text>
</comment>
<comment type="catalytic activity">
    <reaction evidence="1">
        <text>a 1,2-diacyl-sn-glycero-3-phosphocholine + H2O = a 1-acyl-sn-glycero-3-phosphocholine + a fatty acid + H(+)</text>
        <dbReference type="Rhea" id="RHEA:15801"/>
        <dbReference type="ChEBI" id="CHEBI:15377"/>
        <dbReference type="ChEBI" id="CHEBI:15378"/>
        <dbReference type="ChEBI" id="CHEBI:28868"/>
        <dbReference type="ChEBI" id="CHEBI:57643"/>
        <dbReference type="ChEBI" id="CHEBI:58168"/>
        <dbReference type="EC" id="3.1.1.4"/>
    </reaction>
</comment>
<comment type="cofactor">
    <cofactor evidence="1">
        <name>Ca(2+)</name>
        <dbReference type="ChEBI" id="CHEBI:29108"/>
    </cofactor>
</comment>
<comment type="subunit">
    <text evidence="3">Heterodimer of an alpha and a beta chain; probably disulfide-linked.</text>
</comment>
<comment type="subcellular location">
    <subcellularLocation>
        <location evidence="3">Secreted</location>
    </subcellularLocation>
</comment>
<comment type="tissue specificity">
    <text evidence="6">Expressed by the venom duct.</text>
</comment>
<comment type="mass spectrometry">
    <text>The measured mass is of a heterodimer of an alpha and a beta chain.</text>
</comment>
<comment type="mass spectrometry">
    <molecule>Conodipine-P2 alpha subunit</molecule>
</comment>
<comment type="mass spectrometry">
    <molecule>Conodipine-P2 beta subunit</molecule>
</comment>
<comment type="similarity">
    <text evidence="5">Belongs to the phospholipase A2 family. Group IX subfamily.</text>
</comment>
<proteinExistence type="evidence at protein level"/>
<evidence type="ECO:0000250" key="1">
    <source>
        <dbReference type="UniProtKB" id="A0A5C2A2T2"/>
    </source>
</evidence>
<evidence type="ECO:0000250" key="2">
    <source>
        <dbReference type="UniProtKB" id="P00608"/>
    </source>
</evidence>
<evidence type="ECO:0000269" key="3">
    <source>
    </source>
</evidence>
<evidence type="ECO:0000303" key="4">
    <source>
    </source>
</evidence>
<evidence type="ECO:0000305" key="5"/>
<evidence type="ECO:0000305" key="6">
    <source>
    </source>
</evidence>
<evidence type="ECO:0000312" key="7">
    <source>
        <dbReference type="EMBL" id="QEO32923.1"/>
    </source>
</evidence>
<organism evidence="7">
    <name type="scientific">Conus purpurascens</name>
    <name type="common">Purple cone</name>
    <dbReference type="NCBI Taxonomy" id="41690"/>
    <lineage>
        <taxon>Eukaryota</taxon>
        <taxon>Metazoa</taxon>
        <taxon>Spiralia</taxon>
        <taxon>Lophotrochozoa</taxon>
        <taxon>Mollusca</taxon>
        <taxon>Gastropoda</taxon>
        <taxon>Caenogastropoda</taxon>
        <taxon>Neogastropoda</taxon>
        <taxon>Conoidea</taxon>
        <taxon>Conidae</taxon>
        <taxon>Conus</taxon>
        <taxon>Chelyconus</taxon>
    </lineage>
</organism>
<dbReference type="EC" id="3.1.1.4" evidence="1"/>
<dbReference type="EMBL" id="MK493028">
    <property type="protein sequence ID" value="QEO32923.1"/>
    <property type="molecule type" value="mRNA"/>
</dbReference>
<dbReference type="GO" id="GO:0005576">
    <property type="term" value="C:extracellular region"/>
    <property type="evidence" value="ECO:0007669"/>
    <property type="project" value="UniProtKB-SubCell"/>
</dbReference>
<dbReference type="GO" id="GO:0004623">
    <property type="term" value="F:phospholipase A2 activity"/>
    <property type="evidence" value="ECO:0007669"/>
    <property type="project" value="UniProtKB-EC"/>
</dbReference>
<dbReference type="GO" id="GO:0090729">
    <property type="term" value="F:toxin activity"/>
    <property type="evidence" value="ECO:0007669"/>
    <property type="project" value="UniProtKB-KW"/>
</dbReference>
<dbReference type="GO" id="GO:0050482">
    <property type="term" value="P:arachidonate secretion"/>
    <property type="evidence" value="ECO:0007669"/>
    <property type="project" value="InterPro"/>
</dbReference>
<dbReference type="GO" id="GO:0006644">
    <property type="term" value="P:phospholipid metabolic process"/>
    <property type="evidence" value="ECO:0007669"/>
    <property type="project" value="InterPro"/>
</dbReference>
<dbReference type="Gene3D" id="1.20.90.10">
    <property type="entry name" value="Phospholipase A2 domain"/>
    <property type="match status" value="1"/>
</dbReference>
<dbReference type="InterPro" id="IPR038875">
    <property type="entry name" value="PLA2_conodipine-like"/>
</dbReference>
<dbReference type="InterPro" id="IPR036444">
    <property type="entry name" value="PLipase_A2_dom_sf"/>
</dbReference>
<dbReference type="PANTHER" id="PTHR37687">
    <property type="entry name" value="AGAP006772-PA"/>
    <property type="match status" value="1"/>
</dbReference>
<dbReference type="PANTHER" id="PTHR37687:SF1">
    <property type="entry name" value="AGAP006772-PA"/>
    <property type="match status" value="1"/>
</dbReference>
<dbReference type="SUPFAM" id="SSF48619">
    <property type="entry name" value="Phospholipase A2, PLA2"/>
    <property type="match status" value="1"/>
</dbReference>
<protein>
    <recommendedName>
        <fullName evidence="4">Conodipine-P2</fullName>
        <shortName evidence="4">Cdpi-P2</shortName>
        <ecNumber evidence="1">3.1.1.4</ecNumber>
    </recommendedName>
    <alternativeName>
        <fullName evidence="5">Phosphatidylcholine 2-acylhydrolase</fullName>
    </alternativeName>
    <alternativeName>
        <fullName evidence="5">Phospholipase A2</fullName>
        <shortName evidence="5">PLA2</shortName>
    </alternativeName>
    <component>
        <recommendedName>
            <fullName evidence="4">Conodipine-P2 alpha subunit</fullName>
        </recommendedName>
    </component>
    <component>
        <recommendedName>
            <fullName evidence="4">Conodipine-P2 beta subunit</fullName>
        </recommendedName>
    </component>
</protein>
<accession>A0A5C1ZXT8</accession>
<feature type="signal peptide" evidence="1">
    <location>
        <begin position="1"/>
        <end position="24"/>
    </location>
</feature>
<feature type="chain" id="PRO_0000449354" description="Conodipine-P2 alpha subunit" evidence="4">
    <location>
        <begin position="25"/>
        <end position="97"/>
    </location>
</feature>
<feature type="propeptide" id="PRO_0000449355" description="Interchain peptide" evidence="4">
    <location>
        <begin position="98"/>
        <end position="130"/>
    </location>
</feature>
<feature type="chain" id="PRO_0000449356" description="Conodipine-P2 beta subunit" evidence="4">
    <location>
        <begin position="131"/>
        <end position="178"/>
    </location>
</feature>
<feature type="active site" evidence="2">
    <location>
        <position position="54"/>
    </location>
</feature>
<feature type="modified residue" description="4-hydroxyproline" evidence="1">
    <location>
        <position position="38"/>
    </location>
</feature>
<feature type="modified residue" description="4-hydroxyproline" evidence="1">
    <location>
        <position position="42"/>
    </location>
</feature>
<feature type="modified residue" description="4-hydroxyproline" evidence="1">
    <location>
        <position position="49"/>
    </location>
</feature>
<feature type="modified residue" description="Pyrrolidone carboxylic acid" evidence="1">
    <location>
        <position position="131"/>
    </location>
</feature>
<feature type="modified residue" description="4-hydroxyproline" evidence="1">
    <location>
        <position position="137"/>
    </location>
</feature>
<sequence>MKLLAPVLWAMAALGVTWLVAVDSKESCTKHSNGCSTPLRLPCQEYFRPACDIHDNCYHCGTIFGISRKECDDAFLKDMNTLCKKLGSNSATCPARGKREVTSHRATSIAHSRLWKTALDQKSFLNRKARQVFFLLPTTCQGWAKNYHLAVKLAGANSYSVTTDLETCQGLEHCLPNH</sequence>
<name>COP2_CONPU</name>